<proteinExistence type="inferred from homology"/>
<name>HIS7_PASMU</name>
<sequence length="363" mass="41670">MTQQSILFIDRDGTLIDEPKTDFQIDSLEKLQFEPNVIPALLKLKPYYRFVMVSNQDGLGTASFPQENFDKPHNAMMALFKSQGIEFDEVLICPHKPEDECDCRKPKIKLLKKYIDKKLFDPTTSFVIGDRATDVQLAENLGIRALQYDREKLNWDLIVEKLLPKQTALLDRKPRYAEVVRTTKETDIKVQVWLDETGMNDIKTGVGFFDHMLDQIATHGGFRMNVYCKGDLWIDEHHTVEDTALALGTALKQALGDKRGIQRFGFVLPMDECKAECTMDLSGRPYFKFKAKFKRDKVGDFSTEMTEHFFQSLAYTLMATLHLKTKGDNDHHKIESLFKVFGRTLRQCIKVEGNELPSSKGVL</sequence>
<evidence type="ECO:0000255" key="1">
    <source>
        <dbReference type="HAMAP-Rule" id="MF_01022"/>
    </source>
</evidence>
<accession>P57920</accession>
<feature type="chain" id="PRO_0000158215" description="Histidine biosynthesis bifunctional protein HisB">
    <location>
        <begin position="1"/>
        <end position="363"/>
    </location>
</feature>
<feature type="region of interest" description="Histidinol-phosphatase" evidence="1">
    <location>
        <begin position="1"/>
        <end position="174"/>
    </location>
</feature>
<feature type="region of interest" description="Imidazoleglycerol-phosphate dehydratase" evidence="1">
    <location>
        <begin position="175"/>
        <end position="363"/>
    </location>
</feature>
<feature type="active site" description="Nucleophile" evidence="1">
    <location>
        <position position="10"/>
    </location>
</feature>
<feature type="active site" description="Proton donor" evidence="1">
    <location>
        <position position="12"/>
    </location>
</feature>
<feature type="binding site" evidence="1">
    <location>
        <position position="10"/>
    </location>
    <ligand>
        <name>Mg(2+)</name>
        <dbReference type="ChEBI" id="CHEBI:18420"/>
    </ligand>
</feature>
<feature type="binding site" evidence="1">
    <location>
        <position position="12"/>
    </location>
    <ligand>
        <name>Mg(2+)</name>
        <dbReference type="ChEBI" id="CHEBI:18420"/>
    </ligand>
</feature>
<feature type="binding site" evidence="1">
    <location>
        <position position="93"/>
    </location>
    <ligand>
        <name>Zn(2+)</name>
        <dbReference type="ChEBI" id="CHEBI:29105"/>
    </ligand>
</feature>
<feature type="binding site" evidence="1">
    <location>
        <position position="95"/>
    </location>
    <ligand>
        <name>Zn(2+)</name>
        <dbReference type="ChEBI" id="CHEBI:29105"/>
    </ligand>
</feature>
<feature type="binding site" evidence="1">
    <location>
        <position position="101"/>
    </location>
    <ligand>
        <name>Zn(2+)</name>
        <dbReference type="ChEBI" id="CHEBI:29105"/>
    </ligand>
</feature>
<feature type="binding site" evidence="1">
    <location>
        <position position="103"/>
    </location>
    <ligand>
        <name>Zn(2+)</name>
        <dbReference type="ChEBI" id="CHEBI:29105"/>
    </ligand>
</feature>
<feature type="binding site" evidence="1">
    <location>
        <position position="130"/>
    </location>
    <ligand>
        <name>Mg(2+)</name>
        <dbReference type="ChEBI" id="CHEBI:18420"/>
    </ligand>
</feature>
<comment type="catalytic activity">
    <reaction evidence="1">
        <text>D-erythro-1-(imidazol-4-yl)glycerol 3-phosphate = 3-(imidazol-4-yl)-2-oxopropyl phosphate + H2O</text>
        <dbReference type="Rhea" id="RHEA:11040"/>
        <dbReference type="ChEBI" id="CHEBI:15377"/>
        <dbReference type="ChEBI" id="CHEBI:57766"/>
        <dbReference type="ChEBI" id="CHEBI:58278"/>
        <dbReference type="EC" id="4.2.1.19"/>
    </reaction>
</comment>
<comment type="catalytic activity">
    <reaction evidence="1">
        <text>L-histidinol phosphate + H2O = L-histidinol + phosphate</text>
        <dbReference type="Rhea" id="RHEA:14465"/>
        <dbReference type="ChEBI" id="CHEBI:15377"/>
        <dbReference type="ChEBI" id="CHEBI:43474"/>
        <dbReference type="ChEBI" id="CHEBI:57699"/>
        <dbReference type="ChEBI" id="CHEBI:57980"/>
        <dbReference type="EC" id="3.1.3.15"/>
    </reaction>
</comment>
<comment type="cofactor">
    <cofactor evidence="1">
        <name>Mg(2+)</name>
        <dbReference type="ChEBI" id="CHEBI:18420"/>
    </cofactor>
</comment>
<comment type="cofactor">
    <cofactor evidence="1">
        <name>Zn(2+)</name>
        <dbReference type="ChEBI" id="CHEBI:29105"/>
    </cofactor>
</comment>
<comment type="pathway">
    <text evidence="1">Amino-acid biosynthesis; L-histidine biosynthesis; L-histidine from 5-phospho-alpha-D-ribose 1-diphosphate: step 6/9.</text>
</comment>
<comment type="pathway">
    <text evidence="1">Amino-acid biosynthesis; L-histidine biosynthesis; L-histidine from 5-phospho-alpha-D-ribose 1-diphosphate: step 8/9.</text>
</comment>
<comment type="subcellular location">
    <subcellularLocation>
        <location evidence="1">Cytoplasm</location>
    </subcellularLocation>
</comment>
<comment type="similarity">
    <text evidence="1">In the N-terminal section; belongs to the histidinol-phosphatase family.</text>
</comment>
<comment type="similarity">
    <text evidence="1">In the C-terminal section; belongs to the imidazoleglycerol-phosphate dehydratase family.</text>
</comment>
<gene>
    <name evidence="1" type="primary">hisB</name>
    <name type="ordered locus">PM1200</name>
</gene>
<reference key="1">
    <citation type="journal article" date="2001" name="Proc. Natl. Acad. Sci. U.S.A.">
        <title>Complete genomic sequence of Pasteurella multocida Pm70.</title>
        <authorList>
            <person name="May B.J."/>
            <person name="Zhang Q."/>
            <person name="Li L.L."/>
            <person name="Paustian M.L."/>
            <person name="Whittam T.S."/>
            <person name="Kapur V."/>
        </authorList>
    </citation>
    <scope>NUCLEOTIDE SEQUENCE [LARGE SCALE GENOMIC DNA]</scope>
    <source>
        <strain>Pm70</strain>
    </source>
</reference>
<dbReference type="EC" id="3.1.3.15" evidence="1"/>
<dbReference type="EC" id="4.2.1.19" evidence="1"/>
<dbReference type="EMBL" id="AE004439">
    <property type="protein sequence ID" value="AAK03284.1"/>
    <property type="molecule type" value="Genomic_DNA"/>
</dbReference>
<dbReference type="RefSeq" id="WP_010907067.1">
    <property type="nucleotide sequence ID" value="NC_002663.1"/>
</dbReference>
<dbReference type="SMR" id="P57920"/>
<dbReference type="STRING" id="272843.PM1200"/>
<dbReference type="EnsemblBacteria" id="AAK03284">
    <property type="protein sequence ID" value="AAK03284"/>
    <property type="gene ID" value="PM1200"/>
</dbReference>
<dbReference type="KEGG" id="pmu:PM1200"/>
<dbReference type="PATRIC" id="fig|272843.6.peg.1211"/>
<dbReference type="HOGENOM" id="CLU_044308_0_0_6"/>
<dbReference type="OrthoDB" id="9790411at2"/>
<dbReference type="UniPathway" id="UPA00031">
    <property type="reaction ID" value="UER00011"/>
</dbReference>
<dbReference type="UniPathway" id="UPA00031">
    <property type="reaction ID" value="UER00013"/>
</dbReference>
<dbReference type="Proteomes" id="UP000000809">
    <property type="component" value="Chromosome"/>
</dbReference>
<dbReference type="GO" id="GO:0005737">
    <property type="term" value="C:cytoplasm"/>
    <property type="evidence" value="ECO:0007669"/>
    <property type="project" value="UniProtKB-SubCell"/>
</dbReference>
<dbReference type="GO" id="GO:0004401">
    <property type="term" value="F:histidinol-phosphatase activity"/>
    <property type="evidence" value="ECO:0007669"/>
    <property type="project" value="UniProtKB-UniRule"/>
</dbReference>
<dbReference type="GO" id="GO:0004424">
    <property type="term" value="F:imidazoleglycerol-phosphate dehydratase activity"/>
    <property type="evidence" value="ECO:0007669"/>
    <property type="project" value="UniProtKB-UniRule"/>
</dbReference>
<dbReference type="GO" id="GO:0046872">
    <property type="term" value="F:metal ion binding"/>
    <property type="evidence" value="ECO:0007669"/>
    <property type="project" value="UniProtKB-KW"/>
</dbReference>
<dbReference type="GO" id="GO:0000105">
    <property type="term" value="P:L-histidine biosynthetic process"/>
    <property type="evidence" value="ECO:0007669"/>
    <property type="project" value="UniProtKB-UniRule"/>
</dbReference>
<dbReference type="CDD" id="cd07503">
    <property type="entry name" value="HAD_HisB-N"/>
    <property type="match status" value="1"/>
</dbReference>
<dbReference type="CDD" id="cd07914">
    <property type="entry name" value="IGPD"/>
    <property type="match status" value="1"/>
</dbReference>
<dbReference type="FunFam" id="3.40.50.1000:FF:000061">
    <property type="entry name" value="Histidine biosynthesis bifunctional protein HisB"/>
    <property type="match status" value="1"/>
</dbReference>
<dbReference type="FunFam" id="3.30.230.40:FF:000001">
    <property type="entry name" value="Imidazoleglycerol-phosphate dehydratase HisB"/>
    <property type="match status" value="1"/>
</dbReference>
<dbReference type="FunFam" id="3.30.230.40:FF:000003">
    <property type="entry name" value="Imidazoleglycerol-phosphate dehydratase HisB"/>
    <property type="match status" value="1"/>
</dbReference>
<dbReference type="Gene3D" id="3.40.50.1000">
    <property type="entry name" value="HAD superfamily/HAD-like"/>
    <property type="match status" value="1"/>
</dbReference>
<dbReference type="Gene3D" id="3.30.230.40">
    <property type="entry name" value="Imidazole glycerol phosphate dehydratase, domain 1"/>
    <property type="match status" value="2"/>
</dbReference>
<dbReference type="HAMAP" id="MF_01022">
    <property type="entry name" value="Bifunc_HisB"/>
    <property type="match status" value="1"/>
</dbReference>
<dbReference type="HAMAP" id="MF_00076">
    <property type="entry name" value="HisB"/>
    <property type="match status" value="1"/>
</dbReference>
<dbReference type="InterPro" id="IPR036412">
    <property type="entry name" value="HAD-like_sf"/>
</dbReference>
<dbReference type="InterPro" id="IPR006549">
    <property type="entry name" value="HAD-SF_hydro_IIIA"/>
</dbReference>
<dbReference type="InterPro" id="IPR023214">
    <property type="entry name" value="HAD_sf"/>
</dbReference>
<dbReference type="InterPro" id="IPR020566">
    <property type="entry name" value="His_synth_bifunc_HisB"/>
</dbReference>
<dbReference type="InterPro" id="IPR005954">
    <property type="entry name" value="HisB_N"/>
</dbReference>
<dbReference type="InterPro" id="IPR006543">
    <property type="entry name" value="Histidinol-phos"/>
</dbReference>
<dbReference type="InterPro" id="IPR038494">
    <property type="entry name" value="IGPD_sf"/>
</dbReference>
<dbReference type="InterPro" id="IPR000807">
    <property type="entry name" value="ImidazoleglycerolP_deHydtase"/>
</dbReference>
<dbReference type="InterPro" id="IPR020565">
    <property type="entry name" value="ImidazoleglycerP_deHydtase_CS"/>
</dbReference>
<dbReference type="InterPro" id="IPR020568">
    <property type="entry name" value="Ribosomal_Su5_D2-typ_SF"/>
</dbReference>
<dbReference type="NCBIfam" id="TIGR01662">
    <property type="entry name" value="HAD-SF-IIIA"/>
    <property type="match status" value="1"/>
</dbReference>
<dbReference type="NCBIfam" id="TIGR01261">
    <property type="entry name" value="hisB_Nterm"/>
    <property type="match status" value="1"/>
</dbReference>
<dbReference type="NCBIfam" id="TIGR01656">
    <property type="entry name" value="Histidinol-ppas"/>
    <property type="match status" value="1"/>
</dbReference>
<dbReference type="NCBIfam" id="NF002111">
    <property type="entry name" value="PRK00951.2-1"/>
    <property type="match status" value="1"/>
</dbReference>
<dbReference type="NCBIfam" id="NF002114">
    <property type="entry name" value="PRK00951.2-4"/>
    <property type="match status" value="1"/>
</dbReference>
<dbReference type="NCBIfam" id="NF003937">
    <property type="entry name" value="PRK05446.1"/>
    <property type="match status" value="1"/>
</dbReference>
<dbReference type="PANTHER" id="PTHR23133:SF2">
    <property type="entry name" value="IMIDAZOLEGLYCEROL-PHOSPHATE DEHYDRATASE"/>
    <property type="match status" value="1"/>
</dbReference>
<dbReference type="PANTHER" id="PTHR23133">
    <property type="entry name" value="IMIDAZOLEGLYCEROL-PHOSPHATE DEHYDRATASE HIS7"/>
    <property type="match status" value="1"/>
</dbReference>
<dbReference type="Pfam" id="PF13242">
    <property type="entry name" value="Hydrolase_like"/>
    <property type="match status" value="1"/>
</dbReference>
<dbReference type="Pfam" id="PF00475">
    <property type="entry name" value="IGPD"/>
    <property type="match status" value="1"/>
</dbReference>
<dbReference type="SUPFAM" id="SSF56784">
    <property type="entry name" value="HAD-like"/>
    <property type="match status" value="1"/>
</dbReference>
<dbReference type="SUPFAM" id="SSF54211">
    <property type="entry name" value="Ribosomal protein S5 domain 2-like"/>
    <property type="match status" value="2"/>
</dbReference>
<dbReference type="PROSITE" id="PS00954">
    <property type="entry name" value="IGP_DEHYDRATASE_1"/>
    <property type="match status" value="1"/>
</dbReference>
<dbReference type="PROSITE" id="PS00955">
    <property type="entry name" value="IGP_DEHYDRATASE_2"/>
    <property type="match status" value="1"/>
</dbReference>
<organism>
    <name type="scientific">Pasteurella multocida (strain Pm70)</name>
    <dbReference type="NCBI Taxonomy" id="272843"/>
    <lineage>
        <taxon>Bacteria</taxon>
        <taxon>Pseudomonadati</taxon>
        <taxon>Pseudomonadota</taxon>
        <taxon>Gammaproteobacteria</taxon>
        <taxon>Pasteurellales</taxon>
        <taxon>Pasteurellaceae</taxon>
        <taxon>Pasteurella</taxon>
    </lineage>
</organism>
<keyword id="KW-0028">Amino-acid biosynthesis</keyword>
<keyword id="KW-0963">Cytoplasm</keyword>
<keyword id="KW-0368">Histidine biosynthesis</keyword>
<keyword id="KW-0378">Hydrolase</keyword>
<keyword id="KW-0456">Lyase</keyword>
<keyword id="KW-0460">Magnesium</keyword>
<keyword id="KW-0479">Metal-binding</keyword>
<keyword id="KW-0511">Multifunctional enzyme</keyword>
<keyword id="KW-1185">Reference proteome</keyword>
<keyword id="KW-0862">Zinc</keyword>
<protein>
    <recommendedName>
        <fullName evidence="1">Histidine biosynthesis bifunctional protein HisB</fullName>
    </recommendedName>
    <domain>
        <recommendedName>
            <fullName evidence="1">Histidinol-phosphatase</fullName>
            <ecNumber evidence="1">3.1.3.15</ecNumber>
        </recommendedName>
    </domain>
    <domain>
        <recommendedName>
            <fullName evidence="1">Imidazoleglycerol-phosphate dehydratase</fullName>
            <shortName evidence="1">IGPD</shortName>
            <ecNumber evidence="1">4.2.1.19</ecNumber>
        </recommendedName>
    </domain>
</protein>